<organism>
    <name type="scientific">Aliarcobacter butzleri (strain RM4018)</name>
    <name type="common">Arcobacter butzleri</name>
    <dbReference type="NCBI Taxonomy" id="367737"/>
    <lineage>
        <taxon>Bacteria</taxon>
        <taxon>Pseudomonadati</taxon>
        <taxon>Campylobacterota</taxon>
        <taxon>Epsilonproteobacteria</taxon>
        <taxon>Campylobacterales</taxon>
        <taxon>Arcobacteraceae</taxon>
        <taxon>Aliarcobacter</taxon>
    </lineage>
</organism>
<protein>
    <recommendedName>
        <fullName evidence="1">Small ribosomal subunit protein uS15</fullName>
    </recommendedName>
    <alternativeName>
        <fullName evidence="2">30S ribosomal protein S15</fullName>
    </alternativeName>
</protein>
<reference key="1">
    <citation type="journal article" date="2007" name="PLoS ONE">
        <title>The complete genome sequence and analysis of the Epsilonproteobacterium Arcobacter butzleri.</title>
        <authorList>
            <person name="Miller W.G."/>
            <person name="Parker C.T."/>
            <person name="Rubenfield M."/>
            <person name="Mendz G.L."/>
            <person name="Woesten M.M.S.M."/>
            <person name="Ussery D.W."/>
            <person name="Stolz J.F."/>
            <person name="Binnewies T.T."/>
            <person name="Hallin P.F."/>
            <person name="Wang G."/>
            <person name="Malek J.A."/>
            <person name="Rogosin A."/>
            <person name="Stanker L.H."/>
            <person name="Mandrell R.E."/>
        </authorList>
    </citation>
    <scope>NUCLEOTIDE SEQUENCE [LARGE SCALE GENOMIC DNA]</scope>
    <source>
        <strain>RM4018</strain>
    </source>
</reference>
<name>RS15_ALIB4</name>
<evidence type="ECO:0000255" key="1">
    <source>
        <dbReference type="HAMAP-Rule" id="MF_01343"/>
    </source>
</evidence>
<evidence type="ECO:0000305" key="2"/>
<keyword id="KW-1185">Reference proteome</keyword>
<keyword id="KW-0687">Ribonucleoprotein</keyword>
<keyword id="KW-0689">Ribosomal protein</keyword>
<keyword id="KW-0694">RNA-binding</keyword>
<keyword id="KW-0699">rRNA-binding</keyword>
<dbReference type="EMBL" id="CP000361">
    <property type="protein sequence ID" value="ABV66645.1"/>
    <property type="molecule type" value="Genomic_DNA"/>
</dbReference>
<dbReference type="RefSeq" id="WP_012012202.1">
    <property type="nucleotide sequence ID" value="NC_009850.1"/>
</dbReference>
<dbReference type="SMR" id="A8ERS1"/>
<dbReference type="STRING" id="367737.Abu_0370"/>
<dbReference type="GeneID" id="24305057"/>
<dbReference type="KEGG" id="abu:Abu_0370"/>
<dbReference type="eggNOG" id="COG0184">
    <property type="taxonomic scope" value="Bacteria"/>
</dbReference>
<dbReference type="HOGENOM" id="CLU_148518_0_0_7"/>
<dbReference type="Proteomes" id="UP000001136">
    <property type="component" value="Chromosome"/>
</dbReference>
<dbReference type="GO" id="GO:0022627">
    <property type="term" value="C:cytosolic small ribosomal subunit"/>
    <property type="evidence" value="ECO:0007669"/>
    <property type="project" value="TreeGrafter"/>
</dbReference>
<dbReference type="GO" id="GO:0019843">
    <property type="term" value="F:rRNA binding"/>
    <property type="evidence" value="ECO:0007669"/>
    <property type="project" value="UniProtKB-UniRule"/>
</dbReference>
<dbReference type="GO" id="GO:0003735">
    <property type="term" value="F:structural constituent of ribosome"/>
    <property type="evidence" value="ECO:0007669"/>
    <property type="project" value="InterPro"/>
</dbReference>
<dbReference type="GO" id="GO:0006412">
    <property type="term" value="P:translation"/>
    <property type="evidence" value="ECO:0007669"/>
    <property type="project" value="UniProtKB-UniRule"/>
</dbReference>
<dbReference type="CDD" id="cd00353">
    <property type="entry name" value="Ribosomal_S15p_S13e"/>
    <property type="match status" value="1"/>
</dbReference>
<dbReference type="FunFam" id="1.10.287.10:FF:000002">
    <property type="entry name" value="30S ribosomal protein S15"/>
    <property type="match status" value="1"/>
</dbReference>
<dbReference type="Gene3D" id="6.10.250.3130">
    <property type="match status" value="1"/>
</dbReference>
<dbReference type="Gene3D" id="1.10.287.10">
    <property type="entry name" value="S15/NS1, RNA-binding"/>
    <property type="match status" value="1"/>
</dbReference>
<dbReference type="HAMAP" id="MF_01343_B">
    <property type="entry name" value="Ribosomal_uS15_B"/>
    <property type="match status" value="1"/>
</dbReference>
<dbReference type="InterPro" id="IPR000589">
    <property type="entry name" value="Ribosomal_uS15"/>
</dbReference>
<dbReference type="InterPro" id="IPR005290">
    <property type="entry name" value="Ribosomal_uS15_bac-type"/>
</dbReference>
<dbReference type="InterPro" id="IPR009068">
    <property type="entry name" value="uS15_NS1_RNA-bd_sf"/>
</dbReference>
<dbReference type="NCBIfam" id="TIGR00952">
    <property type="entry name" value="S15_bact"/>
    <property type="match status" value="1"/>
</dbReference>
<dbReference type="PANTHER" id="PTHR23321">
    <property type="entry name" value="RIBOSOMAL PROTEIN S15, BACTERIAL AND ORGANELLAR"/>
    <property type="match status" value="1"/>
</dbReference>
<dbReference type="PANTHER" id="PTHR23321:SF26">
    <property type="entry name" value="SMALL RIBOSOMAL SUBUNIT PROTEIN US15M"/>
    <property type="match status" value="1"/>
</dbReference>
<dbReference type="Pfam" id="PF00312">
    <property type="entry name" value="Ribosomal_S15"/>
    <property type="match status" value="1"/>
</dbReference>
<dbReference type="SMART" id="SM01387">
    <property type="entry name" value="Ribosomal_S15"/>
    <property type="match status" value="1"/>
</dbReference>
<dbReference type="SUPFAM" id="SSF47060">
    <property type="entry name" value="S15/NS1 RNA-binding domain"/>
    <property type="match status" value="1"/>
</dbReference>
<dbReference type="PROSITE" id="PS00362">
    <property type="entry name" value="RIBOSOMAL_S15"/>
    <property type="match status" value="1"/>
</dbReference>
<comment type="function">
    <text evidence="1">One of the primary rRNA binding proteins, it binds directly to 16S rRNA where it helps nucleate assembly of the platform of the 30S subunit by binding and bridging several RNA helices of the 16S rRNA.</text>
</comment>
<comment type="function">
    <text evidence="1">Forms an intersubunit bridge (bridge B4) with the 23S rRNA of the 50S subunit in the ribosome.</text>
</comment>
<comment type="subunit">
    <text evidence="1">Part of the 30S ribosomal subunit. Forms a bridge to the 50S subunit in the 70S ribosome, contacting the 23S rRNA.</text>
</comment>
<comment type="similarity">
    <text evidence="1">Belongs to the universal ribosomal protein uS15 family.</text>
</comment>
<sequence length="90" mass="10131">MALDQEVKAAIIAKYGKKDGDTGSSEVQIALLSEQIKILTEHLKVFKKDHSSRLGLLKMVGKRKRLLAYLKRTDYARFTDIVNSLGIRAK</sequence>
<proteinExistence type="inferred from homology"/>
<accession>A8ERS1</accession>
<gene>
    <name evidence="1" type="primary">rpsO</name>
    <name type="ordered locus">Abu_0370</name>
</gene>
<feature type="chain" id="PRO_1000067685" description="Small ribosomal subunit protein uS15">
    <location>
        <begin position="1"/>
        <end position="90"/>
    </location>
</feature>